<organismHost>
    <name type="scientific">Aves</name>
    <dbReference type="NCBI Taxonomy" id="8782"/>
</organismHost>
<organismHost>
    <name type="scientific">Cetacea</name>
    <name type="common">whales</name>
    <dbReference type="NCBI Taxonomy" id="9721"/>
</organismHost>
<organismHost>
    <name type="scientific">Homo sapiens</name>
    <name type="common">Human</name>
    <dbReference type="NCBI Taxonomy" id="9606"/>
</organismHost>
<organismHost>
    <name type="scientific">Phocidae</name>
    <name type="common">true seals</name>
    <dbReference type="NCBI Taxonomy" id="9709"/>
</organismHost>
<organismHost>
    <name type="scientific">Sus scrofa</name>
    <name type="common">Pig</name>
    <dbReference type="NCBI Taxonomy" id="9823"/>
</organismHost>
<organism>
    <name type="scientific">Influenza A virus (strain A/Udorn/307/1972 H3N2)</name>
    <dbReference type="NCBI Taxonomy" id="381517"/>
    <lineage>
        <taxon>Viruses</taxon>
        <taxon>Riboviria</taxon>
        <taxon>Orthornavirae</taxon>
        <taxon>Negarnaviricota</taxon>
        <taxon>Polyploviricotina</taxon>
        <taxon>Insthoviricetes</taxon>
        <taxon>Articulavirales</taxon>
        <taxon>Orthomyxoviridae</taxon>
        <taxon>Alphainfluenzavirus</taxon>
        <taxon>Alphainfluenzavirus influenzae</taxon>
        <taxon>Influenza A virus</taxon>
    </lineage>
</organism>
<sequence>MEDFVRQCFNPMIVELAEKAMKEYGEDLKIETNKFAAICTHLEICFMYSDFHFINEQGESIVVELDDPNALLKHRFEIIEGRDRTMAWTVVNSICNTTGAEKPKFLPDLYDYKENRFIEIGVTRREVHIYYLEKANKIKSENTHIHIFSFTGEEMATKADYTLDDESRARIKTRLFTIRQEMANRGLWDSFRQSERGEETIEERFEITGTMRRLADQSLPPNFSCLENFRAYVDGFEPNGCIEGKLSQMSKEVNARIEPFLKTTPRPIKLPDGPPCFQRSKFLLMDALKLSIEDPSHEGEGIPLYDAIKCMRTFFGWKEPYIVKPHEKGINPNYLLSWKQVLAELQDIENEEKIPRTKNMKKTSQLKWALGENMAPEKVDFDNCRDISDLKQYDSDEPELRSLSSWIQNEFNKACELTDSIWIELDEIGEDVAPIEYIASMRRNYFTAEVSHCRATEYIMKGVYINTALLNASCAAMDDFQLIPMISKCRTKEGRRKTNLYGFIIKGRSHLRNDTDVVNFVSMEFSLTDPRLEPHKWEKYCVLEIGDMLLRSAIGQMSRPMFLYVRTNGTSKIKMKWGMEMRRCLLQSLQQIESMIEAESSVKEKDMTKEFFENKSETWPIGESPKGVEEGSIGKVCRTLLAKSVFNSLYASPQLEGFSAESRKLLLVVQALRDNLEPGTFDLGGLYEAIEECLINDPWVLLNASWFNSFLTHALR</sequence>
<evidence type="ECO:0000250" key="1">
    <source>
        <dbReference type="UniProtKB" id="P03433"/>
    </source>
</evidence>
<evidence type="ECO:0000255" key="2">
    <source>
        <dbReference type="HAMAP-Rule" id="MF_04063"/>
    </source>
</evidence>
<dbReference type="EC" id="3.1.-.-" evidence="2"/>
<dbReference type="EMBL" id="DQ508928">
    <property type="protein sequence ID" value="ABF21267.1"/>
    <property type="molecule type" value="Genomic_RNA"/>
</dbReference>
<dbReference type="SMR" id="Q1K9E2"/>
<dbReference type="IntAct" id="Q1K9E2">
    <property type="interactions" value="1"/>
</dbReference>
<dbReference type="MEROPS" id="S62.001"/>
<dbReference type="Proteomes" id="UP000153055">
    <property type="component" value="Genome"/>
</dbReference>
<dbReference type="GO" id="GO:0030430">
    <property type="term" value="C:host cell cytoplasm"/>
    <property type="evidence" value="ECO:0007669"/>
    <property type="project" value="UniProtKB-SubCell"/>
</dbReference>
<dbReference type="GO" id="GO:0042025">
    <property type="term" value="C:host cell nucleus"/>
    <property type="evidence" value="ECO:0007669"/>
    <property type="project" value="UniProtKB-SubCell"/>
</dbReference>
<dbReference type="GO" id="GO:0004519">
    <property type="term" value="F:endonuclease activity"/>
    <property type="evidence" value="ECO:0007669"/>
    <property type="project" value="UniProtKB-KW"/>
</dbReference>
<dbReference type="GO" id="GO:0046872">
    <property type="term" value="F:metal ion binding"/>
    <property type="evidence" value="ECO:0007669"/>
    <property type="project" value="UniProtKB-KW"/>
</dbReference>
<dbReference type="GO" id="GO:0003723">
    <property type="term" value="F:RNA binding"/>
    <property type="evidence" value="ECO:0007669"/>
    <property type="project" value="UniProtKB-UniRule"/>
</dbReference>
<dbReference type="GO" id="GO:0075526">
    <property type="term" value="P:cap snatching"/>
    <property type="evidence" value="ECO:0007669"/>
    <property type="project" value="UniProtKB-UniRule"/>
</dbReference>
<dbReference type="GO" id="GO:0006351">
    <property type="term" value="P:DNA-templated transcription"/>
    <property type="evidence" value="ECO:0007669"/>
    <property type="project" value="UniProtKB-UniRule"/>
</dbReference>
<dbReference type="GO" id="GO:0039657">
    <property type="term" value="P:symbiont-mediated suppression of host gene expression"/>
    <property type="evidence" value="ECO:0007669"/>
    <property type="project" value="UniProtKB-KW"/>
</dbReference>
<dbReference type="GO" id="GO:0039523">
    <property type="term" value="P:symbiont-mediated suppression of host mRNA transcription via inhibition of RNA polymerase II activity"/>
    <property type="evidence" value="ECO:0007669"/>
    <property type="project" value="UniProtKB-UniRule"/>
</dbReference>
<dbReference type="GO" id="GO:0039694">
    <property type="term" value="P:viral RNA genome replication"/>
    <property type="evidence" value="ECO:0007669"/>
    <property type="project" value="InterPro"/>
</dbReference>
<dbReference type="GO" id="GO:0075523">
    <property type="term" value="P:viral translational frameshifting"/>
    <property type="evidence" value="ECO:0007669"/>
    <property type="project" value="UniProtKB-KW"/>
</dbReference>
<dbReference type="FunFam" id="3.40.91.90:FF:000001">
    <property type="entry name" value="Polymerase acidic protein"/>
    <property type="match status" value="1"/>
</dbReference>
<dbReference type="Gene3D" id="3.40.91.90">
    <property type="entry name" value="Influenza RNA-dependent RNA polymerase subunit PA, endonuclease domain"/>
    <property type="match status" value="1"/>
</dbReference>
<dbReference type="HAMAP" id="MF_04063">
    <property type="entry name" value="INFV_PA"/>
    <property type="match status" value="1"/>
</dbReference>
<dbReference type="InterPro" id="IPR037534">
    <property type="entry name" value="INFV_PA"/>
</dbReference>
<dbReference type="InterPro" id="IPR001009">
    <property type="entry name" value="PA/PA-X"/>
</dbReference>
<dbReference type="InterPro" id="IPR038372">
    <property type="entry name" value="PA/PA-X_sf"/>
</dbReference>
<dbReference type="Pfam" id="PF00603">
    <property type="entry name" value="Flu_PA"/>
    <property type="match status" value="1"/>
</dbReference>
<comment type="function">
    <text evidence="2">Plays an essential role in viral RNA transcription and replication by forming the heterotrimeric polymerase complex together with PB1 and PB2 subunits. The complex transcribes viral mRNAs by using a unique mechanism called cap-snatching. It consists in the hijacking and cleavage of host capped pre-mRNAs. These short capped RNAs are then used as primers for viral mRNAs. The PB2 subunit is responsible for the binding of the 5' cap of cellular pre-mRNAs which are subsequently cleaved after 10-13 nucleotides by the PA subunit that carries the endonuclease activity.</text>
</comment>
<comment type="cofactor">
    <cofactor evidence="2">
        <name>Mn(2+)</name>
        <dbReference type="ChEBI" id="CHEBI:29035"/>
    </cofactor>
    <text evidence="2">Binds 2 manganese ions per subunit.</text>
</comment>
<comment type="subunit">
    <text evidence="1 2">Influenza RNA polymerase is composed of three subunits: PB1, PB2 and PA. Interacts (via C-terminus) with PB1 (via N-terminus).</text>
</comment>
<comment type="subcellular location">
    <subcellularLocation>
        <location evidence="2">Host cytoplasm</location>
    </subcellularLocation>
    <subcellularLocation>
        <location evidence="2">Host nucleus</location>
    </subcellularLocation>
    <text evidence="1 2">PB1 and PA are transported in the host nucleus as a complex.</text>
</comment>
<comment type="alternative products">
    <event type="ribosomal frameshifting"/>
    <isoform>
        <id>Q1K9E2-1</id>
        <name>PA</name>
        <sequence type="displayed"/>
    </isoform>
    <isoform>
        <id>P0DJW0-1</id>
        <name>PA-X</name>
        <sequence type="external"/>
    </isoform>
</comment>
<comment type="PTM">
    <text evidence="1 2">Phosphorylated on serines and threonines by host kinases, including human casein kinase II.</text>
</comment>
<comment type="similarity">
    <text evidence="2">Belongs to the influenza viruses PA family.</text>
</comment>
<reference key="1">
    <citation type="submission" date="2006-04" db="EMBL/GenBank/DDBJ databases">
        <title>Complete genome sequencing and analysis of selected influenza virus vaccine strains spanning six decades (1933-1999).</title>
        <authorList>
            <person name="Mbawuike I.N."/>
            <person name="Zhang Y."/>
            <person name="Yamada R.E."/>
            <person name="Nino D."/>
            <person name="Bui H.-H."/>
            <person name="Sette A."/>
            <person name="Couch R.B."/>
        </authorList>
    </citation>
    <scope>NUCLEOTIDE SEQUENCE [GENOMIC RNA]</scope>
</reference>
<proteinExistence type="inferred from homology"/>
<name>PA_I72A2</name>
<protein>
    <recommendedName>
        <fullName evidence="2">Polymerase acidic protein</fullName>
        <ecNumber evidence="2">3.1.-.-</ecNumber>
    </recommendedName>
    <alternativeName>
        <fullName evidence="2">RNA-directed RNA polymerase subunit P2</fullName>
    </alternativeName>
</protein>
<keyword id="KW-1157">Cap snatching</keyword>
<keyword id="KW-0255">Endonuclease</keyword>
<keyword id="KW-1262">Eukaryotic host gene expression shutoff by virus</keyword>
<keyword id="KW-1191">Eukaryotic host transcription shutoff by virus</keyword>
<keyword id="KW-1035">Host cytoplasm</keyword>
<keyword id="KW-1190">Host gene expression shutoff by virus</keyword>
<keyword id="KW-1048">Host nucleus</keyword>
<keyword id="KW-0945">Host-virus interaction</keyword>
<keyword id="KW-0378">Hydrolase</keyword>
<keyword id="KW-1104">Inhibition of host RNA polymerase II by virus</keyword>
<keyword id="KW-0464">Manganese</keyword>
<keyword id="KW-0479">Metal-binding</keyword>
<keyword id="KW-0540">Nuclease</keyword>
<keyword id="KW-0597">Phosphoprotein</keyword>
<keyword id="KW-0688">Ribosomal frameshifting</keyword>
<accession>Q1K9E2</accession>
<feature type="chain" id="PRO_0000279266" description="Polymerase acidic protein">
    <location>
        <begin position="1"/>
        <end position="716"/>
    </location>
</feature>
<feature type="short sequence motif" description="Nuclear localization signal 1 (NLS1)" evidence="1 2">
    <location>
        <begin position="124"/>
        <end position="139"/>
    </location>
</feature>
<feature type="short sequence motif" description="Nuclear localization signal 2 (NLS2)" evidence="1 2">
    <location>
        <begin position="184"/>
        <end position="247"/>
    </location>
</feature>
<feature type="binding site" evidence="2">
    <location>
        <position position="41"/>
    </location>
    <ligand>
        <name>Mn(2+)</name>
        <dbReference type="ChEBI" id="CHEBI:29035"/>
        <label>1</label>
    </ligand>
</feature>
<feature type="binding site" evidence="2">
    <location>
        <position position="80"/>
    </location>
    <ligand>
        <name>Mn(2+)</name>
        <dbReference type="ChEBI" id="CHEBI:29035"/>
        <label>2</label>
    </ligand>
</feature>
<feature type="binding site" evidence="2">
    <location>
        <position position="108"/>
    </location>
    <ligand>
        <name>Mn(2+)</name>
        <dbReference type="ChEBI" id="CHEBI:29035"/>
        <label>1</label>
    </ligand>
</feature>
<feature type="binding site" evidence="2">
    <location>
        <position position="108"/>
    </location>
    <ligand>
        <name>Mn(2+)</name>
        <dbReference type="ChEBI" id="CHEBI:29035"/>
        <label>2</label>
    </ligand>
</feature>
<feature type="binding site" evidence="2">
    <location>
        <position position="119"/>
    </location>
    <ligand>
        <name>Mn(2+)</name>
        <dbReference type="ChEBI" id="CHEBI:29035"/>
        <label>1</label>
    </ligand>
</feature>
<feature type="binding site" evidence="2">
    <location>
        <position position="120"/>
    </location>
    <ligand>
        <name>Mn(2+)</name>
        <dbReference type="ChEBI" id="CHEBI:29035"/>
        <label>1</label>
    </ligand>
</feature>
<gene>
    <name evidence="2" type="primary">PA</name>
</gene>